<comment type="catalytic activity">
    <reaction evidence="1">
        <text>L-citrulline + L-aspartate + ATP = 2-(N(omega)-L-arginino)succinate + AMP + diphosphate + H(+)</text>
        <dbReference type="Rhea" id="RHEA:10932"/>
        <dbReference type="ChEBI" id="CHEBI:15378"/>
        <dbReference type="ChEBI" id="CHEBI:29991"/>
        <dbReference type="ChEBI" id="CHEBI:30616"/>
        <dbReference type="ChEBI" id="CHEBI:33019"/>
        <dbReference type="ChEBI" id="CHEBI:57472"/>
        <dbReference type="ChEBI" id="CHEBI:57743"/>
        <dbReference type="ChEBI" id="CHEBI:456215"/>
        <dbReference type="EC" id="6.3.4.5"/>
    </reaction>
</comment>
<comment type="pathway">
    <text evidence="1">Amino-acid biosynthesis; L-arginine biosynthesis; L-arginine from L-ornithine and carbamoyl phosphate: step 2/3.</text>
</comment>
<comment type="subunit">
    <text evidence="1">Homotetramer.</text>
</comment>
<comment type="subcellular location">
    <subcellularLocation>
        <location evidence="1">Cytoplasm</location>
    </subcellularLocation>
</comment>
<comment type="similarity">
    <text evidence="1">Belongs to the argininosuccinate synthase family. Type 1 subfamily.</text>
</comment>
<evidence type="ECO:0000255" key="1">
    <source>
        <dbReference type="HAMAP-Rule" id="MF_00005"/>
    </source>
</evidence>
<feature type="chain" id="PRO_1000057039" description="Argininosuccinate synthase">
    <location>
        <begin position="1"/>
        <end position="410"/>
    </location>
</feature>
<feature type="binding site" evidence="1">
    <location>
        <begin position="9"/>
        <end position="17"/>
    </location>
    <ligand>
        <name>ATP</name>
        <dbReference type="ChEBI" id="CHEBI:30616"/>
    </ligand>
</feature>
<feature type="binding site" evidence="1">
    <location>
        <position position="86"/>
    </location>
    <ligand>
        <name>L-citrulline</name>
        <dbReference type="ChEBI" id="CHEBI:57743"/>
    </ligand>
</feature>
<feature type="binding site" evidence="1">
    <location>
        <position position="116"/>
    </location>
    <ligand>
        <name>ATP</name>
        <dbReference type="ChEBI" id="CHEBI:30616"/>
    </ligand>
</feature>
<feature type="binding site" evidence="1">
    <location>
        <position position="118"/>
    </location>
    <ligand>
        <name>L-aspartate</name>
        <dbReference type="ChEBI" id="CHEBI:29991"/>
    </ligand>
</feature>
<feature type="binding site" evidence="1">
    <location>
        <position position="122"/>
    </location>
    <ligand>
        <name>L-aspartate</name>
        <dbReference type="ChEBI" id="CHEBI:29991"/>
    </ligand>
</feature>
<feature type="binding site" evidence="1">
    <location>
        <position position="122"/>
    </location>
    <ligand>
        <name>L-citrulline</name>
        <dbReference type="ChEBI" id="CHEBI:57743"/>
    </ligand>
</feature>
<feature type="binding site" evidence="1">
    <location>
        <position position="123"/>
    </location>
    <ligand>
        <name>L-aspartate</name>
        <dbReference type="ChEBI" id="CHEBI:29991"/>
    </ligand>
</feature>
<feature type="binding site" evidence="1">
    <location>
        <position position="126"/>
    </location>
    <ligand>
        <name>L-citrulline</name>
        <dbReference type="ChEBI" id="CHEBI:57743"/>
    </ligand>
</feature>
<feature type="binding site" evidence="1">
    <location>
        <position position="174"/>
    </location>
    <ligand>
        <name>L-citrulline</name>
        <dbReference type="ChEBI" id="CHEBI:57743"/>
    </ligand>
</feature>
<feature type="binding site" evidence="1">
    <location>
        <position position="259"/>
    </location>
    <ligand>
        <name>L-citrulline</name>
        <dbReference type="ChEBI" id="CHEBI:57743"/>
    </ligand>
</feature>
<feature type="binding site" evidence="1">
    <location>
        <position position="271"/>
    </location>
    <ligand>
        <name>L-citrulline</name>
        <dbReference type="ChEBI" id="CHEBI:57743"/>
    </ligand>
</feature>
<sequence length="410" mass="45395">MSKEKIVLAYSGGLDTSVAIAWLKNKGYDVIACCIDVGEGKDLEAIKEKGLQVGAWKSVVIDAKRDFAEQFVLPALQAHAMYEQKYPLVSALSRPLIVQKLVAVANQYGATAIAHGCTGKGNDQVRFEAGIHALAPEMKIEDPIRDWHWSREEEIQYAKDNGIPVPITKASPYSIDENLWGRANECGILEDPWAAAPADAYDRTVSIEEAPDTPTTIEITFNEGVPTAIDGEEMPLDQLIMKLDKLAGSHGIGRIDHVENRLVGIKSREIYECPAATVLLAAHKDLEDLTQEREVAHFKPLIEQKMSGIIYNGLWYSPLMKSLVAFIDESQAVVNGVVRVKLFKGNVICEGRKSPNSLYDKNLATYTSADEFDQEAATGFIKLWELPDKVYAQVQNKNKKKVKENTSDAY</sequence>
<protein>
    <recommendedName>
        <fullName evidence="1">Argininosuccinate synthase</fullName>
        <ecNumber evidence="1">6.3.4.5</ecNumber>
    </recommendedName>
    <alternativeName>
        <fullName evidence="1">Citrulline--aspartate ligase</fullName>
    </alternativeName>
</protein>
<name>ASSY_LIMRD</name>
<dbReference type="EC" id="6.3.4.5" evidence="1"/>
<dbReference type="EMBL" id="CP000705">
    <property type="protein sequence ID" value="ABQ82995.1"/>
    <property type="molecule type" value="Genomic_DNA"/>
</dbReference>
<dbReference type="RefSeq" id="WP_011953439.1">
    <property type="nucleotide sequence ID" value="NC_009513.1"/>
</dbReference>
<dbReference type="SMR" id="A5VJH1"/>
<dbReference type="STRING" id="557436.Lreu_0731"/>
<dbReference type="KEGG" id="lre:Lreu_0731"/>
<dbReference type="eggNOG" id="COG0137">
    <property type="taxonomic scope" value="Bacteria"/>
</dbReference>
<dbReference type="HOGENOM" id="CLU_032784_4_2_9"/>
<dbReference type="UniPathway" id="UPA00068">
    <property type="reaction ID" value="UER00113"/>
</dbReference>
<dbReference type="Proteomes" id="UP000001991">
    <property type="component" value="Chromosome"/>
</dbReference>
<dbReference type="GO" id="GO:0005737">
    <property type="term" value="C:cytoplasm"/>
    <property type="evidence" value="ECO:0007669"/>
    <property type="project" value="UniProtKB-SubCell"/>
</dbReference>
<dbReference type="GO" id="GO:0004055">
    <property type="term" value="F:argininosuccinate synthase activity"/>
    <property type="evidence" value="ECO:0007669"/>
    <property type="project" value="UniProtKB-UniRule"/>
</dbReference>
<dbReference type="GO" id="GO:0005524">
    <property type="term" value="F:ATP binding"/>
    <property type="evidence" value="ECO:0007669"/>
    <property type="project" value="UniProtKB-UniRule"/>
</dbReference>
<dbReference type="GO" id="GO:0000053">
    <property type="term" value="P:argininosuccinate metabolic process"/>
    <property type="evidence" value="ECO:0007669"/>
    <property type="project" value="TreeGrafter"/>
</dbReference>
<dbReference type="GO" id="GO:0006526">
    <property type="term" value="P:L-arginine biosynthetic process"/>
    <property type="evidence" value="ECO:0007669"/>
    <property type="project" value="UniProtKB-UniRule"/>
</dbReference>
<dbReference type="GO" id="GO:0000050">
    <property type="term" value="P:urea cycle"/>
    <property type="evidence" value="ECO:0007669"/>
    <property type="project" value="TreeGrafter"/>
</dbReference>
<dbReference type="CDD" id="cd01999">
    <property type="entry name" value="ASS"/>
    <property type="match status" value="1"/>
</dbReference>
<dbReference type="FunFam" id="3.40.50.620:FF:000038">
    <property type="entry name" value="Argininosuccinate synthase"/>
    <property type="match status" value="1"/>
</dbReference>
<dbReference type="FunFam" id="3.90.1260.10:FF:000007">
    <property type="entry name" value="Argininosuccinate synthase"/>
    <property type="match status" value="1"/>
</dbReference>
<dbReference type="Gene3D" id="3.90.1260.10">
    <property type="entry name" value="Argininosuccinate synthetase, chain A, domain 2"/>
    <property type="match status" value="1"/>
</dbReference>
<dbReference type="Gene3D" id="3.40.50.620">
    <property type="entry name" value="HUPs"/>
    <property type="match status" value="1"/>
</dbReference>
<dbReference type="HAMAP" id="MF_00005">
    <property type="entry name" value="Arg_succ_synth_type1"/>
    <property type="match status" value="1"/>
</dbReference>
<dbReference type="InterPro" id="IPR048268">
    <property type="entry name" value="Arginosuc_syn_C"/>
</dbReference>
<dbReference type="InterPro" id="IPR048267">
    <property type="entry name" value="Arginosuc_syn_N"/>
</dbReference>
<dbReference type="InterPro" id="IPR001518">
    <property type="entry name" value="Arginosuc_synth"/>
</dbReference>
<dbReference type="InterPro" id="IPR018223">
    <property type="entry name" value="Arginosuc_synth_CS"/>
</dbReference>
<dbReference type="InterPro" id="IPR023434">
    <property type="entry name" value="Arginosuc_synth_type_1_subfam"/>
</dbReference>
<dbReference type="InterPro" id="IPR024074">
    <property type="entry name" value="AS_cat/multimer_dom_body"/>
</dbReference>
<dbReference type="InterPro" id="IPR014729">
    <property type="entry name" value="Rossmann-like_a/b/a_fold"/>
</dbReference>
<dbReference type="NCBIfam" id="TIGR00032">
    <property type="entry name" value="argG"/>
    <property type="match status" value="1"/>
</dbReference>
<dbReference type="NCBIfam" id="NF001770">
    <property type="entry name" value="PRK00509.1"/>
    <property type="match status" value="1"/>
</dbReference>
<dbReference type="PANTHER" id="PTHR11587">
    <property type="entry name" value="ARGININOSUCCINATE SYNTHASE"/>
    <property type="match status" value="1"/>
</dbReference>
<dbReference type="PANTHER" id="PTHR11587:SF2">
    <property type="entry name" value="ARGININOSUCCINATE SYNTHASE"/>
    <property type="match status" value="1"/>
</dbReference>
<dbReference type="Pfam" id="PF20979">
    <property type="entry name" value="Arginosuc_syn_C"/>
    <property type="match status" value="1"/>
</dbReference>
<dbReference type="Pfam" id="PF00764">
    <property type="entry name" value="Arginosuc_synth"/>
    <property type="match status" value="1"/>
</dbReference>
<dbReference type="SUPFAM" id="SSF52402">
    <property type="entry name" value="Adenine nucleotide alpha hydrolases-like"/>
    <property type="match status" value="1"/>
</dbReference>
<dbReference type="SUPFAM" id="SSF69864">
    <property type="entry name" value="Argininosuccinate synthetase, C-terminal domain"/>
    <property type="match status" value="1"/>
</dbReference>
<dbReference type="PROSITE" id="PS00564">
    <property type="entry name" value="ARGININOSUCCIN_SYN_1"/>
    <property type="match status" value="1"/>
</dbReference>
<dbReference type="PROSITE" id="PS00565">
    <property type="entry name" value="ARGININOSUCCIN_SYN_2"/>
    <property type="match status" value="1"/>
</dbReference>
<proteinExistence type="inferred from homology"/>
<keyword id="KW-0028">Amino-acid biosynthesis</keyword>
<keyword id="KW-0055">Arginine biosynthesis</keyword>
<keyword id="KW-0067">ATP-binding</keyword>
<keyword id="KW-0963">Cytoplasm</keyword>
<keyword id="KW-0436">Ligase</keyword>
<keyword id="KW-0547">Nucleotide-binding</keyword>
<keyword id="KW-1185">Reference proteome</keyword>
<gene>
    <name evidence="1" type="primary">argG</name>
    <name type="ordered locus">Lreu_0731</name>
</gene>
<organism>
    <name type="scientific">Limosilactobacillus reuteri (strain DSM 20016)</name>
    <name type="common">Lactobacillus reuteri</name>
    <dbReference type="NCBI Taxonomy" id="557436"/>
    <lineage>
        <taxon>Bacteria</taxon>
        <taxon>Bacillati</taxon>
        <taxon>Bacillota</taxon>
        <taxon>Bacilli</taxon>
        <taxon>Lactobacillales</taxon>
        <taxon>Lactobacillaceae</taxon>
        <taxon>Limosilactobacillus</taxon>
    </lineage>
</organism>
<accession>A5VJH1</accession>
<reference key="1">
    <citation type="journal article" date="2011" name="PLoS Genet.">
        <title>The evolution of host specialization in the vertebrate gut symbiont Lactobacillus reuteri.</title>
        <authorList>
            <person name="Frese S.A."/>
            <person name="Benson A.K."/>
            <person name="Tannock G.W."/>
            <person name="Loach D.M."/>
            <person name="Kim J."/>
            <person name="Zhang M."/>
            <person name="Oh P.L."/>
            <person name="Heng N.C."/>
            <person name="Patil P.B."/>
            <person name="Juge N."/>
            <person name="Mackenzie D.A."/>
            <person name="Pearson B.M."/>
            <person name="Lapidus A."/>
            <person name="Dalin E."/>
            <person name="Tice H."/>
            <person name="Goltsman E."/>
            <person name="Land M."/>
            <person name="Hauser L."/>
            <person name="Ivanova N."/>
            <person name="Kyrpides N.C."/>
            <person name="Walter J."/>
        </authorList>
    </citation>
    <scope>NUCLEOTIDE SEQUENCE [LARGE SCALE GENOMIC DNA]</scope>
    <source>
        <strain>DSM 20016</strain>
    </source>
</reference>